<evidence type="ECO:0000250" key="1"/>
<evidence type="ECO:0000250" key="2">
    <source>
        <dbReference type="UniProtKB" id="P13727"/>
    </source>
</evidence>
<evidence type="ECO:0000255" key="3"/>
<evidence type="ECO:0000255" key="4">
    <source>
        <dbReference type="PROSITE-ProRule" id="PRU00040"/>
    </source>
</evidence>
<evidence type="ECO:0000256" key="5">
    <source>
        <dbReference type="SAM" id="MobiDB-lite"/>
    </source>
</evidence>
<evidence type="ECO:0000269" key="6">
    <source>
    </source>
</evidence>
<name>PRG2_MOUSE</name>
<protein>
    <recommendedName>
        <fullName>Bone marrow proteoglycan</fullName>
        <shortName>BMPG</shortName>
    </recommendedName>
    <alternativeName>
        <fullName>Proteoglycan 2</fullName>
    </alternativeName>
    <component>
        <recommendedName>
            <fullName>Eosinophil granule major basic protein</fullName>
            <shortName>EMBP</shortName>
            <shortName>MBP</shortName>
        </recommendedName>
    </component>
</protein>
<feature type="signal peptide" evidence="3">
    <location>
        <begin position="1"/>
        <end position="16"/>
    </location>
</feature>
<feature type="chain" id="PRO_0000259924" description="Bone marrow proteoglycan">
    <location>
        <begin position="17"/>
        <end position="223"/>
    </location>
</feature>
<feature type="propeptide" id="PRO_0000017387" description="Acidic">
    <location>
        <begin position="17"/>
        <end position="106"/>
    </location>
</feature>
<feature type="chain" id="PRO_0000017388" description="Eosinophil granule major basic protein">
    <location>
        <begin position="107"/>
        <end position="223"/>
    </location>
</feature>
<feature type="domain" description="C-type lectin" evidence="4">
    <location>
        <begin position="124"/>
        <end position="223"/>
    </location>
</feature>
<feature type="region of interest" description="Disordered" evidence="5">
    <location>
        <begin position="20"/>
        <end position="81"/>
    </location>
</feature>
<feature type="glycosylation site" description="O-linked (GalNAc...) threonine; partial" evidence="2">
    <location>
        <position position="23"/>
    </location>
</feature>
<feature type="glycosylation site" description="O-linked (GalNAc...) serine" evidence="2">
    <location>
        <position position="24"/>
    </location>
</feature>
<feature type="glycosylation site" description="O-linked (Xyl...) (chondroitin sulfate) serine" evidence="2">
    <location>
        <position position="66"/>
    </location>
</feature>
<feature type="disulfide bond" evidence="4">
    <location>
        <begin position="126"/>
        <end position="221"/>
    </location>
</feature>
<feature type="disulfide bond" evidence="4">
    <location>
        <begin position="198"/>
        <end position="213"/>
    </location>
</feature>
<organism>
    <name type="scientific">Mus musculus</name>
    <name type="common">Mouse</name>
    <dbReference type="NCBI Taxonomy" id="10090"/>
    <lineage>
        <taxon>Eukaryota</taxon>
        <taxon>Metazoa</taxon>
        <taxon>Chordata</taxon>
        <taxon>Craniata</taxon>
        <taxon>Vertebrata</taxon>
        <taxon>Euteleostomi</taxon>
        <taxon>Mammalia</taxon>
        <taxon>Eutheria</taxon>
        <taxon>Euarchontoglires</taxon>
        <taxon>Glires</taxon>
        <taxon>Rodentia</taxon>
        <taxon>Myomorpha</taxon>
        <taxon>Muroidea</taxon>
        <taxon>Muridae</taxon>
        <taxon>Murinae</taxon>
        <taxon>Mus</taxon>
        <taxon>Mus</taxon>
    </lineage>
</organism>
<sequence length="223" mass="24255">MKFPLLLALLVGGASALHLSSETSDSKSPLMDENLPRDAEISGPEGEECPPGEELMPLEGEKEEGSGSEGVPGDEGAVSGQDVTDVDLQCPKEEDTTSLMGDSGCKTCRYLLVRRAECFDKAQSVCRRCYRGTLASIHSFSVNFGIQSAVRGINQGQVWIGGRIKGWGRCKRFRWVDGSSWNFAYWAAGQPCPGGGRCVTLCTQGGHWRLSHCVKRRPFICSY</sequence>
<proteinExistence type="evidence at protein level"/>
<gene>
    <name type="primary">Prg2</name>
    <name type="synonym">Mbp-1</name>
</gene>
<reference key="1">
    <citation type="journal article" date="1995" name="J. Immunol.">
        <title>The identification and cloning of a murine major basic protein gene expressed in eosinophils.</title>
        <authorList>
            <person name="Larson K.A."/>
            <person name="Horton M.A."/>
            <person name="Madden B.J."/>
            <person name="Gleich G.J."/>
            <person name="Lee N.A."/>
            <person name="Lee J.J."/>
        </authorList>
    </citation>
    <scope>NUCLEOTIDE SEQUENCE [GENOMIC DNA]</scope>
    <scope>PARTIAL PROTEIN SEQUENCE</scope>
    <source>
        <strain>CBA/J</strain>
        <tissue>Liver</tissue>
    </source>
</reference>
<reference key="2">
    <citation type="journal article" date="2008" name="J. Biol. Chem.">
        <title>Post-translational tyrosine nitration of eosinophil granule toxins mediated by eosinophil peroxidase.</title>
        <authorList>
            <person name="Ulrich M."/>
            <person name="Petre A."/>
            <person name="Youhnovski N."/>
            <person name="Proemm F."/>
            <person name="Schirle M."/>
            <person name="Schumm M."/>
            <person name="Pero R.S."/>
            <person name="Doyle A."/>
            <person name="Checkel J."/>
            <person name="Kita H."/>
            <person name="Thiyagarajan N."/>
            <person name="Acharya K.R."/>
            <person name="Schmid-Grendelmeier P."/>
            <person name="Simon H.-U."/>
            <person name="Schwarz H."/>
            <person name="Tsutsui M."/>
            <person name="Shimokawa H."/>
            <person name="Bellon G."/>
            <person name="Lee J.J."/>
            <person name="Przybylski M."/>
            <person name="Doering G."/>
        </authorList>
    </citation>
    <scope>NITRATION</scope>
</reference>
<reference key="3">
    <citation type="journal article" date="2010" name="Cell">
        <title>A tissue-specific atlas of mouse protein phosphorylation and expression.</title>
        <authorList>
            <person name="Huttlin E.L."/>
            <person name="Jedrychowski M.P."/>
            <person name="Elias J.E."/>
            <person name="Goswami T."/>
            <person name="Rad R."/>
            <person name="Beausoleil S.A."/>
            <person name="Villen J."/>
            <person name="Haas W."/>
            <person name="Sowa M.E."/>
            <person name="Gygi S.P."/>
        </authorList>
    </citation>
    <scope>IDENTIFICATION BY MASS SPECTROMETRY [LARGE SCALE ANALYSIS]</scope>
    <source>
        <tissue>Spleen</tissue>
    </source>
</reference>
<keyword id="KW-0044">Antibiotic</keyword>
<keyword id="KW-0929">Antimicrobial</keyword>
<keyword id="KW-0903">Direct protein sequencing</keyword>
<keyword id="KW-1015">Disulfide bond</keyword>
<keyword id="KW-0325">Glycoprotein</keyword>
<keyword id="KW-0391">Immunity</keyword>
<keyword id="KW-0430">Lectin</keyword>
<keyword id="KW-0944">Nitration</keyword>
<keyword id="KW-0654">Proteoglycan</keyword>
<keyword id="KW-1185">Reference proteome</keyword>
<keyword id="KW-0964">Secreted</keyword>
<keyword id="KW-0732">Signal</keyword>
<comment type="function">
    <text evidence="1">Cytotoxin and helminthotoxin. MBP also induces non-cytolytic histamine release from basophils. It is involved in antiparasitic defense mechanisms and immune hypersensitivity reactions (By similarity).</text>
</comment>
<comment type="subcellular location">
    <subcellularLocation>
        <location evidence="2">Secreted</location>
    </subcellularLocation>
</comment>
<comment type="PTM">
    <text evidence="6">Nitrated.</text>
</comment>
<comment type="online information" name="Functional Glycomics Gateway - Glycan Binding">
    <link uri="http://www.functionalglycomics.org/glycomics/GBPServlet?&amp;operationType=view&amp;cbpId=cbp_mou_Ctlect_151"/>
    <text>Eosinophil major basic protein</text>
</comment>
<dbReference type="EMBL" id="L46768">
    <property type="protein sequence ID" value="AAA83027.1"/>
    <property type="molecule type" value="Genomic_DNA"/>
</dbReference>
<dbReference type="CCDS" id="CCDS16198.1"/>
<dbReference type="RefSeq" id="NP_032946.1">
    <property type="nucleotide sequence ID" value="NM_008920.4"/>
</dbReference>
<dbReference type="RefSeq" id="XP_036015513.1">
    <property type="nucleotide sequence ID" value="XM_036159620.1"/>
</dbReference>
<dbReference type="SMR" id="Q61878"/>
<dbReference type="BioGRID" id="202360">
    <property type="interactions" value="1"/>
</dbReference>
<dbReference type="FunCoup" id="Q61878">
    <property type="interactions" value="106"/>
</dbReference>
<dbReference type="STRING" id="10090.ENSMUSP00000028467"/>
<dbReference type="MEROPS" id="I63.001"/>
<dbReference type="CarbonylDB" id="Q61878"/>
<dbReference type="GlyGen" id="Q61878">
    <property type="glycosylation" value="3 sites"/>
</dbReference>
<dbReference type="PhosphoSitePlus" id="Q61878"/>
<dbReference type="jPOST" id="Q61878"/>
<dbReference type="PaxDb" id="10090-ENSMUSP00000028467"/>
<dbReference type="ProteomicsDB" id="289406"/>
<dbReference type="DNASU" id="19074"/>
<dbReference type="Ensembl" id="ENSMUST00000028467.6">
    <property type="protein sequence ID" value="ENSMUSP00000028467.6"/>
    <property type="gene ID" value="ENSMUSG00000027073.6"/>
</dbReference>
<dbReference type="GeneID" id="19074"/>
<dbReference type="KEGG" id="mmu:19074"/>
<dbReference type="UCSC" id="uc008kjp.1">
    <property type="organism name" value="mouse"/>
</dbReference>
<dbReference type="AGR" id="MGI:103294"/>
<dbReference type="CTD" id="5553"/>
<dbReference type="MGI" id="MGI:103294">
    <property type="gene designation" value="Prg2"/>
</dbReference>
<dbReference type="VEuPathDB" id="HostDB:ENSMUSG00000027073"/>
<dbReference type="eggNOG" id="KOG4297">
    <property type="taxonomic scope" value="Eukaryota"/>
</dbReference>
<dbReference type="GeneTree" id="ENSGT00440000039859"/>
<dbReference type="HOGENOM" id="CLU_107200_1_0_1"/>
<dbReference type="InParanoid" id="Q61878"/>
<dbReference type="OMA" id="WGRCKRF"/>
<dbReference type="OrthoDB" id="6369810at2759"/>
<dbReference type="PhylomeDB" id="Q61878"/>
<dbReference type="TreeFam" id="TF336281"/>
<dbReference type="Reactome" id="R-MMU-6798695">
    <property type="pathway name" value="Neutrophil degranulation"/>
</dbReference>
<dbReference type="BioGRID-ORCS" id="19074">
    <property type="hits" value="2 hits in 80 CRISPR screens"/>
</dbReference>
<dbReference type="PRO" id="PR:Q61878"/>
<dbReference type="Proteomes" id="UP000000589">
    <property type="component" value="Chromosome 2"/>
</dbReference>
<dbReference type="RNAct" id="Q61878">
    <property type="molecule type" value="protein"/>
</dbReference>
<dbReference type="Bgee" id="ENSMUSG00000027073">
    <property type="expression patterns" value="Expressed in femorotibial joint and 69 other cell types or tissues"/>
</dbReference>
<dbReference type="ExpressionAtlas" id="Q61878">
    <property type="expression patterns" value="baseline and differential"/>
</dbReference>
<dbReference type="GO" id="GO:0062023">
    <property type="term" value="C:collagen-containing extracellular matrix"/>
    <property type="evidence" value="ECO:0007005"/>
    <property type="project" value="BHF-UCL"/>
</dbReference>
<dbReference type="GO" id="GO:0005576">
    <property type="term" value="C:extracellular region"/>
    <property type="evidence" value="ECO:0007669"/>
    <property type="project" value="UniProtKB-SubCell"/>
</dbReference>
<dbReference type="GO" id="GO:0030246">
    <property type="term" value="F:carbohydrate binding"/>
    <property type="evidence" value="ECO:0007669"/>
    <property type="project" value="UniProtKB-KW"/>
</dbReference>
<dbReference type="GO" id="GO:0042742">
    <property type="term" value="P:defense response to bacterium"/>
    <property type="evidence" value="ECO:0007669"/>
    <property type="project" value="UniProtKB-KW"/>
</dbReference>
<dbReference type="GO" id="GO:0002215">
    <property type="term" value="P:defense response to nematode"/>
    <property type="evidence" value="ECO:0000315"/>
    <property type="project" value="MGI"/>
</dbReference>
<dbReference type="GO" id="GO:0006955">
    <property type="term" value="P:immune response"/>
    <property type="evidence" value="ECO:0007669"/>
    <property type="project" value="InterPro"/>
</dbReference>
<dbReference type="GO" id="GO:0032693">
    <property type="term" value="P:negative regulation of interleukin-10 production"/>
    <property type="evidence" value="ECO:0000315"/>
    <property type="project" value="MGI"/>
</dbReference>
<dbReference type="GO" id="GO:0010936">
    <property type="term" value="P:negative regulation of macrophage cytokine production"/>
    <property type="evidence" value="ECO:0000315"/>
    <property type="project" value="MGI"/>
</dbReference>
<dbReference type="GO" id="GO:0032753">
    <property type="term" value="P:positive regulation of interleukin-4 production"/>
    <property type="evidence" value="ECO:0000315"/>
    <property type="project" value="MGI"/>
</dbReference>
<dbReference type="CDD" id="cd03598">
    <property type="entry name" value="CLECT_EMBP_like"/>
    <property type="match status" value="1"/>
</dbReference>
<dbReference type="FunFam" id="3.10.100.10:FF:000090">
    <property type="entry name" value="Proteoglycan 2, bone marrow"/>
    <property type="match status" value="1"/>
</dbReference>
<dbReference type="Gene3D" id="3.10.100.10">
    <property type="entry name" value="Mannose-Binding Protein A, subunit A"/>
    <property type="match status" value="1"/>
</dbReference>
<dbReference type="InterPro" id="IPR001304">
    <property type="entry name" value="C-type_lectin-like"/>
</dbReference>
<dbReference type="InterPro" id="IPR016186">
    <property type="entry name" value="C-type_lectin-like/link_sf"/>
</dbReference>
<dbReference type="InterPro" id="IPR050111">
    <property type="entry name" value="C-type_lectin/snaclec_domain"/>
</dbReference>
<dbReference type="InterPro" id="IPR016187">
    <property type="entry name" value="CTDL_fold"/>
</dbReference>
<dbReference type="InterPro" id="IPR033816">
    <property type="entry name" value="EMBP_CTLD"/>
</dbReference>
<dbReference type="InterPro" id="IPR002352">
    <property type="entry name" value="Eosinophil_major_basic"/>
</dbReference>
<dbReference type="PANTHER" id="PTHR22803">
    <property type="entry name" value="MANNOSE, PHOSPHOLIPASE, LECTIN RECEPTOR RELATED"/>
    <property type="match status" value="1"/>
</dbReference>
<dbReference type="Pfam" id="PF00059">
    <property type="entry name" value="Lectin_C"/>
    <property type="match status" value="1"/>
</dbReference>
<dbReference type="PRINTS" id="PR00770">
    <property type="entry name" value="EMAJORBASICP"/>
</dbReference>
<dbReference type="SMART" id="SM00034">
    <property type="entry name" value="CLECT"/>
    <property type="match status" value="1"/>
</dbReference>
<dbReference type="SUPFAM" id="SSF56436">
    <property type="entry name" value="C-type lectin-like"/>
    <property type="match status" value="1"/>
</dbReference>
<dbReference type="PROSITE" id="PS50041">
    <property type="entry name" value="C_TYPE_LECTIN_2"/>
    <property type="match status" value="1"/>
</dbReference>
<accession>Q61878</accession>